<name>ICAM5_RABIT</name>
<evidence type="ECO:0000250" key="1"/>
<evidence type="ECO:0000250" key="2">
    <source>
        <dbReference type="UniProtKB" id="Q9UMF0"/>
    </source>
</evidence>
<evidence type="ECO:0000255" key="3"/>
<evidence type="ECO:0000255" key="4">
    <source>
        <dbReference type="PROSITE-ProRule" id="PRU00114"/>
    </source>
</evidence>
<evidence type="ECO:0000256" key="5">
    <source>
        <dbReference type="SAM" id="MobiDB-lite"/>
    </source>
</evidence>
<evidence type="ECO:0000305" key="6"/>
<accession>Q28730</accession>
<dbReference type="EMBL" id="L13199">
    <property type="protein sequence ID" value="AAA18478.1"/>
    <property type="molecule type" value="Unassigned_DNA"/>
</dbReference>
<dbReference type="RefSeq" id="NP_001164621.1">
    <property type="nucleotide sequence ID" value="NM_001171150.1"/>
</dbReference>
<dbReference type="SMR" id="Q28730"/>
<dbReference type="FunCoup" id="Q28730">
    <property type="interactions" value="35"/>
</dbReference>
<dbReference type="GlyCosmos" id="Q28730">
    <property type="glycosylation" value="12 sites, No reported glycans"/>
</dbReference>
<dbReference type="GeneID" id="100328960"/>
<dbReference type="KEGG" id="ocu:100328960"/>
<dbReference type="CTD" id="7087"/>
<dbReference type="InParanoid" id="Q28730"/>
<dbReference type="OrthoDB" id="6250964at2759"/>
<dbReference type="Proteomes" id="UP000001811">
    <property type="component" value="Unplaced"/>
</dbReference>
<dbReference type="GO" id="GO:0005886">
    <property type="term" value="C:plasma membrane"/>
    <property type="evidence" value="ECO:0007669"/>
    <property type="project" value="TreeGrafter"/>
</dbReference>
<dbReference type="GO" id="GO:0005178">
    <property type="term" value="F:integrin binding"/>
    <property type="evidence" value="ECO:0007669"/>
    <property type="project" value="InterPro"/>
</dbReference>
<dbReference type="GO" id="GO:0098609">
    <property type="term" value="P:cell-cell adhesion"/>
    <property type="evidence" value="ECO:0007669"/>
    <property type="project" value="InterPro"/>
</dbReference>
<dbReference type="CDD" id="cd00096">
    <property type="entry name" value="Ig"/>
    <property type="match status" value="1"/>
</dbReference>
<dbReference type="FunFam" id="2.60.40.10:FF:000194">
    <property type="entry name" value="Intercellular adhesion molecule 1"/>
    <property type="match status" value="1"/>
</dbReference>
<dbReference type="FunFam" id="2.60.40.10:FF:000459">
    <property type="entry name" value="Intercellular adhesion molecule 1"/>
    <property type="match status" value="1"/>
</dbReference>
<dbReference type="FunFam" id="2.60.40.10:FF:000648">
    <property type="entry name" value="Intercellular adhesion molecule 1"/>
    <property type="match status" value="1"/>
</dbReference>
<dbReference type="FunFam" id="2.60.40.10:FF:000335">
    <property type="entry name" value="Intercellular adhesion molecule 5"/>
    <property type="match status" value="2"/>
</dbReference>
<dbReference type="FunFam" id="2.60.40.10:FF:000950">
    <property type="entry name" value="Intercellular adhesion molecule 5"/>
    <property type="match status" value="1"/>
</dbReference>
<dbReference type="FunFam" id="2.60.40.10:FF:000338">
    <property type="entry name" value="intercellular adhesion molecule 5"/>
    <property type="match status" value="1"/>
</dbReference>
<dbReference type="Gene3D" id="2.60.40.10">
    <property type="entry name" value="Immunoglobulins"/>
    <property type="match status" value="9"/>
</dbReference>
<dbReference type="InterPro" id="IPR003988">
    <property type="entry name" value="ICAM"/>
</dbReference>
<dbReference type="InterPro" id="IPR048679">
    <property type="entry name" value="ICAM1_3_5_D2"/>
</dbReference>
<dbReference type="InterPro" id="IPR013768">
    <property type="entry name" value="ICAM_N"/>
</dbReference>
<dbReference type="InterPro" id="IPR047012">
    <property type="entry name" value="ICAM_VCAM"/>
</dbReference>
<dbReference type="InterPro" id="IPR003987">
    <property type="entry name" value="ICAM_VCAM_N"/>
</dbReference>
<dbReference type="InterPro" id="IPR007110">
    <property type="entry name" value="Ig-like_dom"/>
</dbReference>
<dbReference type="InterPro" id="IPR036179">
    <property type="entry name" value="Ig-like_dom_sf"/>
</dbReference>
<dbReference type="InterPro" id="IPR013783">
    <property type="entry name" value="Ig-like_fold"/>
</dbReference>
<dbReference type="InterPro" id="IPR003599">
    <property type="entry name" value="Ig_sub"/>
</dbReference>
<dbReference type="InterPro" id="IPR003598">
    <property type="entry name" value="Ig_sub2"/>
</dbReference>
<dbReference type="PANTHER" id="PTHR13771">
    <property type="entry name" value="INTERCELLULAR ADHESION MOLECULE"/>
    <property type="match status" value="1"/>
</dbReference>
<dbReference type="PANTHER" id="PTHR13771:SF9">
    <property type="entry name" value="INTERCELLULAR ADHESION MOLECULE 5"/>
    <property type="match status" value="1"/>
</dbReference>
<dbReference type="Pfam" id="PF21146">
    <property type="entry name" value="ICAM1_3_5_D2"/>
    <property type="match status" value="1"/>
</dbReference>
<dbReference type="Pfam" id="PF03921">
    <property type="entry name" value="ICAM_N"/>
    <property type="match status" value="1"/>
</dbReference>
<dbReference type="Pfam" id="PF13927">
    <property type="entry name" value="Ig_3"/>
    <property type="match status" value="1"/>
</dbReference>
<dbReference type="PRINTS" id="PR01473">
    <property type="entry name" value="ICAM"/>
</dbReference>
<dbReference type="PRINTS" id="PR01472">
    <property type="entry name" value="ICAMVCAM1"/>
</dbReference>
<dbReference type="SMART" id="SM00409">
    <property type="entry name" value="IG"/>
    <property type="match status" value="5"/>
</dbReference>
<dbReference type="SMART" id="SM00408">
    <property type="entry name" value="IGc2"/>
    <property type="match status" value="3"/>
</dbReference>
<dbReference type="SUPFAM" id="SSF48726">
    <property type="entry name" value="Immunoglobulin"/>
    <property type="match status" value="9"/>
</dbReference>
<dbReference type="PROSITE" id="PS50835">
    <property type="entry name" value="IG_LIKE"/>
    <property type="match status" value="3"/>
</dbReference>
<sequence>MPGPSPGLRALLGFWVALGLGILRLSAVAQEPFWADLQPRVALVERGGSLWLNCSTNCPRPERGGLETSLRRNGPEGLRWRARQLVDIREPETQPVCFFRCAATLQARGLIRTFQRPDRVELVPLPPWQPVGENFTLSCRVPGAGPRGSLTLTLLRGAQELIRRSFAGEPARARGAVLTATVLARREDHGANFSCRAELDLRPQGLALFENSSAPRQLWTYALPLDSPRLLAPRVLEVDSQSLVSCTLDGLFPASEAGVHLALGDKRLNPEVTLEGDAIVATATATAEEEGIKQLVCAVTLGGERRESRENVTVYSFPAPLLTLSEPSAPEGKLVTVTCTAGARALVTLEGVPAAAPGQPAQLQFNASESDDGRSFFCDATLELDGETLSKNGSAELRVLYAPRLDDADCPRSWTWPEGPEQTLRCEARGNPTPAVHCARSDGGAVLALGLLGPVTRALAGTYRCTAANVQGEAVKDVTLTVEYAPALDSVGCPERVTWLEGTEASLSCVAHGVPPPSVSCVRFRQADVIEGLLLVAREHAGTYRCEAINARALAKNVAVTVEYGPSFEERSCPSNWTWVEGSEQLFSCEVEGKPQPSVQCVGSEGASEGLLLPLAPLNPSPSDPSVPRDLAPGIYVCNATNPLGSAVKTVVVSAESPPQMDDSTCPSDQTWLEGAEAAGPACARGRPSPRVRCSREGAPRPARPRVSREDAGTYLCVATNAHGSDSRTVTVGVEYRPVVAELAASPSGGVRPGGNFTLTCRAEAWPPAQISWRAPPGAPNIGLSSNNSTLSVPGAMGSHGGEYECEATNAHGHARRITVRVAGPWLWIAVGGAVGGAVLLAAGAGLAFYVQSTACKKGEYNVQEAESSGEAVCLNGAGGGAGSGAEGGPEAEDSAESPAGGEVFAIQLTSA</sequence>
<gene>
    <name type="primary">ICAM5</name>
    <name type="synonym">TLCN</name>
</gene>
<feature type="signal peptide" evidence="3">
    <location>
        <begin position="1"/>
        <end position="29"/>
    </location>
</feature>
<feature type="chain" id="PRO_0000014801" description="Intercellular adhesion molecule 5">
    <location>
        <begin position="30"/>
        <end position="912"/>
    </location>
</feature>
<feature type="topological domain" description="Extracellular" evidence="3">
    <location>
        <begin position="30"/>
        <end position="826"/>
    </location>
</feature>
<feature type="transmembrane region" description="Helical" evidence="3">
    <location>
        <begin position="827"/>
        <end position="847"/>
    </location>
</feature>
<feature type="topological domain" description="Cytoplasmic" evidence="3">
    <location>
        <begin position="848"/>
        <end position="912"/>
    </location>
</feature>
<feature type="domain" description="Ig-like C2-type 1">
    <location>
        <begin position="47"/>
        <end position="127"/>
    </location>
</feature>
<feature type="domain" description="Ig-like C2-type 2">
    <location>
        <begin position="132"/>
        <end position="232"/>
    </location>
</feature>
<feature type="domain" description="Ig-like C2-type 3">
    <location>
        <begin position="239"/>
        <end position="324"/>
    </location>
</feature>
<feature type="domain" description="Ig-like C2-type 4">
    <location>
        <begin position="332"/>
        <end position="395"/>
    </location>
</feature>
<feature type="domain" description="Ig-like C2-type 5">
    <location>
        <begin position="403"/>
        <end position="481"/>
    </location>
</feature>
<feature type="domain" description="Ig-like C2-type 6">
    <location>
        <begin position="486"/>
        <end position="561"/>
    </location>
</feature>
<feature type="domain" description="Ig-like C2-type 7">
    <location>
        <begin position="566"/>
        <end position="645"/>
    </location>
</feature>
<feature type="domain" description="Ig-like C2-type 8">
    <location>
        <begin position="659"/>
        <end position="734"/>
    </location>
</feature>
<feature type="domain" description="Ig-like C2-type 9">
    <location>
        <begin position="738"/>
        <end position="819"/>
    </location>
</feature>
<feature type="region of interest" description="Disordered" evidence="5">
    <location>
        <begin position="678"/>
        <end position="708"/>
    </location>
</feature>
<feature type="region of interest" description="Disordered" evidence="5">
    <location>
        <begin position="880"/>
        <end position="902"/>
    </location>
</feature>
<feature type="modified residue" description="Phosphothreonine" evidence="2">
    <location>
        <position position="179"/>
    </location>
</feature>
<feature type="modified residue" description="Phosphothreonine" evidence="2">
    <location>
        <position position="181"/>
    </location>
</feature>
<feature type="glycosylation site" description="N-linked (GlcNAc...) (high mannose) asparagine" evidence="1">
    <location>
        <position position="53"/>
    </location>
</feature>
<feature type="glycosylation site" description="N-linked (GlcNAc...) asparagine" evidence="3">
    <location>
        <position position="134"/>
    </location>
</feature>
<feature type="glycosylation site" description="N-linked (GlcNAc...) asparagine" evidence="3">
    <location>
        <position position="192"/>
    </location>
</feature>
<feature type="glycosylation site" description="N-linked (GlcNAc...) asparagine" evidence="3">
    <location>
        <position position="211"/>
    </location>
</feature>
<feature type="glycosylation site" description="N-linked (GlcNAc...) asparagine" evidence="3">
    <location>
        <position position="311"/>
    </location>
</feature>
<feature type="glycosylation site" description="N-linked (GlcNAc...) asparagine" evidence="3">
    <location>
        <position position="366"/>
    </location>
</feature>
<feature type="glycosylation site" description="N-linked (GlcNAc...) asparagine" evidence="3">
    <location>
        <position position="392"/>
    </location>
</feature>
<feature type="glycosylation site" description="N-linked (GlcNAc...) asparagine" evidence="3">
    <location>
        <position position="576"/>
    </location>
</feature>
<feature type="glycosylation site" description="N-linked (GlcNAc...) asparagine" evidence="3">
    <location>
        <position position="639"/>
    </location>
</feature>
<feature type="glycosylation site" description="N-linked (GlcNAc...) asparagine" evidence="3">
    <location>
        <position position="756"/>
    </location>
</feature>
<feature type="glycosylation site" description="N-linked (GlcNAc...) asparagine" evidence="3">
    <location>
        <position position="787"/>
    </location>
</feature>
<feature type="glycosylation site" description="N-linked (GlcNAc...) asparagine" evidence="3">
    <location>
        <position position="788"/>
    </location>
</feature>
<feature type="disulfide bond" evidence="4">
    <location>
        <begin position="54"/>
        <end position="97"/>
    </location>
</feature>
<feature type="disulfide bond" evidence="4">
    <location>
        <begin position="58"/>
        <end position="101"/>
    </location>
</feature>
<feature type="disulfide bond" evidence="4">
    <location>
        <begin position="139"/>
        <end position="195"/>
    </location>
</feature>
<feature type="disulfide bond" evidence="4">
    <location>
        <begin position="246"/>
        <end position="297"/>
    </location>
</feature>
<feature type="disulfide bond" evidence="4">
    <location>
        <begin position="339"/>
        <end position="378"/>
    </location>
</feature>
<feature type="disulfide bond" evidence="4">
    <location>
        <begin position="410"/>
        <end position="465"/>
    </location>
</feature>
<feature type="disulfide bond" evidence="4">
    <location>
        <begin position="493"/>
        <end position="546"/>
    </location>
</feature>
<feature type="disulfide bond" evidence="4">
    <location>
        <begin position="573"/>
        <end position="638"/>
    </location>
</feature>
<feature type="disulfide bond" evidence="4">
    <location>
        <begin position="666"/>
        <end position="717"/>
    </location>
</feature>
<feature type="disulfide bond" evidence="4">
    <location>
        <begin position="761"/>
        <end position="806"/>
    </location>
</feature>
<reference key="1">
    <citation type="journal article" date="1994" name="Neuron">
        <title>An ICAM-related neuronal glycoprotein, telencephalin, with brain segment-specific expression.</title>
        <authorList>
            <person name="Yoshihara Y."/>
            <person name="Oka S."/>
            <person name="Nemoto Y."/>
            <person name="Watanabe Y."/>
            <person name="Nagata S."/>
            <person name="Kagamiyama H."/>
            <person name="Mori K."/>
        </authorList>
    </citation>
    <scope>NUCLEOTIDE SEQUENCE</scope>
    <source>
        <strain>Japanese white</strain>
        <tissue>Brain</tissue>
    </source>
</reference>
<organism>
    <name type="scientific">Oryctolagus cuniculus</name>
    <name type="common">Rabbit</name>
    <dbReference type="NCBI Taxonomy" id="9986"/>
    <lineage>
        <taxon>Eukaryota</taxon>
        <taxon>Metazoa</taxon>
        <taxon>Chordata</taxon>
        <taxon>Craniata</taxon>
        <taxon>Vertebrata</taxon>
        <taxon>Euteleostomi</taxon>
        <taxon>Mammalia</taxon>
        <taxon>Eutheria</taxon>
        <taxon>Euarchontoglires</taxon>
        <taxon>Glires</taxon>
        <taxon>Lagomorpha</taxon>
        <taxon>Leporidae</taxon>
        <taxon>Oryctolagus</taxon>
    </lineage>
</organism>
<proteinExistence type="evidence at transcript level"/>
<protein>
    <recommendedName>
        <fullName>Intercellular adhesion molecule 5</fullName>
        <shortName>ICAM-5</shortName>
    </recommendedName>
    <alternativeName>
        <fullName>Telencephalin</fullName>
    </alternativeName>
</protein>
<comment type="function">
    <text>ICAM proteins are ligands for the leukocyte adhesion protein LFA-1 (integrin alpha-L/beta-2).</text>
</comment>
<comment type="subcellular location">
    <subcellularLocation>
        <location>Membrane</location>
        <topology>Single-pass type I membrane protein</topology>
    </subcellularLocation>
</comment>
<comment type="tissue specificity">
    <text>Expressed on neurons in the most rostral segment of the mammalian brain, the telencephalon.</text>
</comment>
<comment type="PTM">
    <text evidence="1">Glycosylation at Asn-53 is critical for functional folding.</text>
</comment>
<comment type="similarity">
    <text evidence="6">Belongs to the immunoglobulin superfamily. ICAM family.</text>
</comment>
<keyword id="KW-0130">Cell adhesion</keyword>
<keyword id="KW-1015">Disulfide bond</keyword>
<keyword id="KW-0325">Glycoprotein</keyword>
<keyword id="KW-0393">Immunoglobulin domain</keyword>
<keyword id="KW-0472">Membrane</keyword>
<keyword id="KW-0597">Phosphoprotein</keyword>
<keyword id="KW-1185">Reference proteome</keyword>
<keyword id="KW-0677">Repeat</keyword>
<keyword id="KW-0732">Signal</keyword>
<keyword id="KW-0812">Transmembrane</keyword>
<keyword id="KW-1133">Transmembrane helix</keyword>